<organism>
    <name type="scientific">Mycobacterium leprae (strain TN)</name>
    <dbReference type="NCBI Taxonomy" id="272631"/>
    <lineage>
        <taxon>Bacteria</taxon>
        <taxon>Bacillati</taxon>
        <taxon>Actinomycetota</taxon>
        <taxon>Actinomycetes</taxon>
        <taxon>Mycobacteriales</taxon>
        <taxon>Mycobacteriaceae</taxon>
        <taxon>Mycobacterium</taxon>
    </lineage>
</organism>
<evidence type="ECO:0000250" key="1"/>
<evidence type="ECO:0000255" key="2"/>
<evidence type="ECO:0000305" key="3"/>
<sequence length="911" mass="99792">MSAAMTAEVCEDHTKPMLMLLDGNSLAFRAFYALPTENFKTRGGLTTNAVYGFTAMLINLLREEAPTHIAAAFDVSRKTFRSECYAGYKANRSSIPAEFHGQIDITKEVLGALGITVFAEAGFEADDLIATLATQAENEGYRVLVVTGDRDALQLVSNDVTVLYPRKGVSELTRFTPEAVIEKYGVTPAQYPDLAALRGDPSDNLPGIPGVGEKTAAKWIVDYGSLQGLVDNVESVRGKVGEALRTHLASVVRNRELTELVKDVPLVQTSDTLRLQPWDRDRIHRLFDNLEFRVLRDRLFEALAAAGERVPEVDEGFDVRGGLLESGTVGRWLAKHADDGRRSGLAIVGTHLPHGGDATALAVAAADGNGGYIDTAMLTPDDDDALAAWLADPDNPKALHEAKLAMHDLAGRGWTLGGITSDTALAAYLVRPGQRSFTLDDLSLRYLRRELRAETPEQEQFSLLDNVDEVDKQAIQTLILRARAVVDLAAALDAELDLIDSTSLLGEMELPVQQVLADMEKAGIAADLRLLTELQSQFGDQIRDAAEAAYAVIGKQINLSSPKQLQVVLFEELGMPKTKRTKTGYTTDADALQSLFCKTEHPFLQHLLTHRDVTRLKVTVDGLLNAVAADGRIHTTFNQTIATTGRLSSTEPNLQNIPIRTNAGRQIRDAFVVGSENNGYTELMTADYSQIEMRIMAHLSRDEGLIEAFHTGEDLHSFVASRAFGIPIEDITPELRRRVKAMSYGLAYGLSAYGLATQLKISTEEAKLQMEQYFARFGGVRDYLMDVVEQARKDGYTSTVLGRRRYLPELDSSNRQIREAAERAALNAPIQGSAADIIKVAMIAVDKSLKQAKLASRMLLQVHDELLFEVAIGEREQIEAMVREQMGSAYPLDVPLEVSVGFGRSWGAAAH</sequence>
<feature type="chain" id="PRO_0000101246" description="DNA polymerase I">
    <location>
        <begin position="1"/>
        <end position="911"/>
    </location>
</feature>
<feature type="domain" description="5'-3' exonuclease" evidence="2">
    <location>
        <begin position="186"/>
        <end position="280"/>
    </location>
</feature>
<feature type="domain" description="3'-5' exonuclease" evidence="2">
    <location>
        <begin position="320"/>
        <end position="497"/>
    </location>
</feature>
<comment type="function">
    <text evidence="1">In addition to polymerase activity, this DNA polymerase exhibits 3'-5' and 5'-3' exonuclease activity.</text>
</comment>
<comment type="catalytic activity">
    <reaction>
        <text>DNA(n) + a 2'-deoxyribonucleoside 5'-triphosphate = DNA(n+1) + diphosphate</text>
        <dbReference type="Rhea" id="RHEA:22508"/>
        <dbReference type="Rhea" id="RHEA-COMP:17339"/>
        <dbReference type="Rhea" id="RHEA-COMP:17340"/>
        <dbReference type="ChEBI" id="CHEBI:33019"/>
        <dbReference type="ChEBI" id="CHEBI:61560"/>
        <dbReference type="ChEBI" id="CHEBI:173112"/>
        <dbReference type="EC" id="2.7.7.7"/>
    </reaction>
</comment>
<comment type="subunit">
    <text>Single-chain monomer with multiple functions.</text>
</comment>
<comment type="similarity">
    <text evidence="3">Belongs to the DNA polymerase type-A family.</text>
</comment>
<comment type="sequence caution" evidence="3">
    <conflict type="erroneous initiation">
        <sequence resource="EMBL-CDS" id="AAA50927"/>
    </conflict>
</comment>
<keyword id="KW-0227">DNA damage</keyword>
<keyword id="KW-0234">DNA repair</keyword>
<keyword id="KW-0235">DNA replication</keyword>
<keyword id="KW-0238">DNA-binding</keyword>
<keyword id="KW-0239">DNA-directed DNA polymerase</keyword>
<keyword id="KW-0269">Exonuclease</keyword>
<keyword id="KW-0378">Hydrolase</keyword>
<keyword id="KW-0540">Nuclease</keyword>
<keyword id="KW-0548">Nucleotidyltransferase</keyword>
<keyword id="KW-1185">Reference proteome</keyword>
<keyword id="KW-0808">Transferase</keyword>
<dbReference type="EC" id="2.7.7.7"/>
<dbReference type="EMBL" id="Z46257">
    <property type="protein sequence ID" value="CAA86364.1"/>
    <property type="molecule type" value="Genomic_DNA"/>
</dbReference>
<dbReference type="EMBL" id="U00021">
    <property type="protein sequence ID" value="AAA50927.1"/>
    <property type="status" value="ALT_INIT"/>
    <property type="molecule type" value="Genomic_DNA"/>
</dbReference>
<dbReference type="EMBL" id="AL583921">
    <property type="protein sequence ID" value="CAC31762.1"/>
    <property type="molecule type" value="Genomic_DNA"/>
</dbReference>
<dbReference type="PIR" id="S77659">
    <property type="entry name" value="S77659"/>
</dbReference>
<dbReference type="RefSeq" id="NP_301982.1">
    <property type="nucleotide sequence ID" value="NC_002677.1"/>
</dbReference>
<dbReference type="RefSeq" id="WP_049769942.1">
    <property type="nucleotide sequence ID" value="NC_002677.1"/>
</dbReference>
<dbReference type="SMR" id="P46835"/>
<dbReference type="STRING" id="272631.gene:17575220"/>
<dbReference type="KEGG" id="mle:ML1381"/>
<dbReference type="PATRIC" id="fig|272631.5.peg.2560"/>
<dbReference type="Leproma" id="ML1381"/>
<dbReference type="eggNOG" id="COG0258">
    <property type="taxonomic scope" value="Bacteria"/>
</dbReference>
<dbReference type="eggNOG" id="COG0749">
    <property type="taxonomic scope" value="Bacteria"/>
</dbReference>
<dbReference type="HOGENOM" id="CLU_004675_0_0_11"/>
<dbReference type="OrthoDB" id="9806424at2"/>
<dbReference type="Proteomes" id="UP000000806">
    <property type="component" value="Chromosome"/>
</dbReference>
<dbReference type="GO" id="GO:0008408">
    <property type="term" value="F:3'-5' exonuclease activity"/>
    <property type="evidence" value="ECO:0007669"/>
    <property type="project" value="InterPro"/>
</dbReference>
<dbReference type="GO" id="GO:0008409">
    <property type="term" value="F:5'-3' exonuclease activity"/>
    <property type="evidence" value="ECO:0007669"/>
    <property type="project" value="InterPro"/>
</dbReference>
<dbReference type="GO" id="GO:0003677">
    <property type="term" value="F:DNA binding"/>
    <property type="evidence" value="ECO:0007669"/>
    <property type="project" value="UniProtKB-KW"/>
</dbReference>
<dbReference type="GO" id="GO:0003887">
    <property type="term" value="F:DNA-directed DNA polymerase activity"/>
    <property type="evidence" value="ECO:0007669"/>
    <property type="project" value="UniProtKB-KW"/>
</dbReference>
<dbReference type="GO" id="GO:0006261">
    <property type="term" value="P:DNA-templated DNA replication"/>
    <property type="evidence" value="ECO:0007669"/>
    <property type="project" value="InterPro"/>
</dbReference>
<dbReference type="GO" id="GO:0006302">
    <property type="term" value="P:double-strand break repair"/>
    <property type="evidence" value="ECO:0007669"/>
    <property type="project" value="TreeGrafter"/>
</dbReference>
<dbReference type="CDD" id="cd08637">
    <property type="entry name" value="DNA_pol_A_pol_I_C"/>
    <property type="match status" value="1"/>
</dbReference>
<dbReference type="CDD" id="cd06140">
    <property type="entry name" value="DNA_polA_I_Bacillus_like_exo"/>
    <property type="match status" value="1"/>
</dbReference>
<dbReference type="CDD" id="cd09898">
    <property type="entry name" value="H3TH_53EXO"/>
    <property type="match status" value="1"/>
</dbReference>
<dbReference type="CDD" id="cd09859">
    <property type="entry name" value="PIN_53EXO"/>
    <property type="match status" value="1"/>
</dbReference>
<dbReference type="FunFam" id="1.10.150.20:FF:000002">
    <property type="entry name" value="DNA polymerase I"/>
    <property type="match status" value="1"/>
</dbReference>
<dbReference type="FunFam" id="1.10.150.20:FF:000003">
    <property type="entry name" value="DNA polymerase I"/>
    <property type="match status" value="1"/>
</dbReference>
<dbReference type="FunFam" id="1.20.1060.10:FF:000001">
    <property type="entry name" value="DNA polymerase I"/>
    <property type="match status" value="1"/>
</dbReference>
<dbReference type="FunFam" id="3.40.50.1010:FF:000001">
    <property type="entry name" value="DNA polymerase I"/>
    <property type="match status" value="1"/>
</dbReference>
<dbReference type="Gene3D" id="3.30.70.370">
    <property type="match status" value="1"/>
</dbReference>
<dbReference type="Gene3D" id="1.10.150.20">
    <property type="entry name" value="5' to 3' exonuclease, C-terminal subdomain"/>
    <property type="match status" value="2"/>
</dbReference>
<dbReference type="Gene3D" id="3.40.50.1010">
    <property type="entry name" value="5'-nuclease"/>
    <property type="match status" value="1"/>
</dbReference>
<dbReference type="Gene3D" id="3.30.420.10">
    <property type="entry name" value="Ribonuclease H-like superfamily/Ribonuclease H"/>
    <property type="match status" value="1"/>
</dbReference>
<dbReference type="Gene3D" id="1.20.1060.10">
    <property type="entry name" value="Taq DNA Polymerase, Chain T, domain 4"/>
    <property type="match status" value="1"/>
</dbReference>
<dbReference type="InterPro" id="IPR002562">
    <property type="entry name" value="3'-5'_exonuclease_dom"/>
</dbReference>
<dbReference type="InterPro" id="IPR020046">
    <property type="entry name" value="5-3_exonucl_a-hlix_arch_N"/>
</dbReference>
<dbReference type="InterPro" id="IPR002421">
    <property type="entry name" value="5-3_exonuclease"/>
</dbReference>
<dbReference type="InterPro" id="IPR036279">
    <property type="entry name" value="5-3_exonuclease_C_sf"/>
</dbReference>
<dbReference type="InterPro" id="IPR019760">
    <property type="entry name" value="DNA-dir_DNA_pol_A_CS"/>
</dbReference>
<dbReference type="InterPro" id="IPR001098">
    <property type="entry name" value="DNA-dir_DNA_pol_A_palm_dom"/>
</dbReference>
<dbReference type="InterPro" id="IPR043502">
    <property type="entry name" value="DNA/RNA_pol_sf"/>
</dbReference>
<dbReference type="InterPro" id="IPR054690">
    <property type="entry name" value="DNA_polI_exonuclease"/>
</dbReference>
<dbReference type="InterPro" id="IPR020045">
    <property type="entry name" value="DNA_polI_H3TH"/>
</dbReference>
<dbReference type="InterPro" id="IPR018320">
    <property type="entry name" value="DNA_polymerase_1"/>
</dbReference>
<dbReference type="InterPro" id="IPR002298">
    <property type="entry name" value="DNA_polymerase_A"/>
</dbReference>
<dbReference type="InterPro" id="IPR008918">
    <property type="entry name" value="HhH2"/>
</dbReference>
<dbReference type="InterPro" id="IPR029060">
    <property type="entry name" value="PIN-like_dom_sf"/>
</dbReference>
<dbReference type="InterPro" id="IPR012337">
    <property type="entry name" value="RNaseH-like_sf"/>
</dbReference>
<dbReference type="InterPro" id="IPR036397">
    <property type="entry name" value="RNaseH_sf"/>
</dbReference>
<dbReference type="NCBIfam" id="TIGR00593">
    <property type="entry name" value="pola"/>
    <property type="match status" value="1"/>
</dbReference>
<dbReference type="NCBIfam" id="NF004397">
    <property type="entry name" value="PRK05755.1"/>
    <property type="match status" value="1"/>
</dbReference>
<dbReference type="PANTHER" id="PTHR10133">
    <property type="entry name" value="DNA POLYMERASE I"/>
    <property type="match status" value="1"/>
</dbReference>
<dbReference type="PANTHER" id="PTHR10133:SF27">
    <property type="entry name" value="DNA POLYMERASE NU"/>
    <property type="match status" value="1"/>
</dbReference>
<dbReference type="Pfam" id="PF01367">
    <property type="entry name" value="5_3_exonuc"/>
    <property type="match status" value="1"/>
</dbReference>
<dbReference type="Pfam" id="PF02739">
    <property type="entry name" value="5_3_exonuc_N"/>
    <property type="match status" value="1"/>
</dbReference>
<dbReference type="Pfam" id="PF00476">
    <property type="entry name" value="DNA_pol_A"/>
    <property type="match status" value="1"/>
</dbReference>
<dbReference type="Pfam" id="PF22619">
    <property type="entry name" value="DNA_polI_exo1"/>
    <property type="match status" value="1"/>
</dbReference>
<dbReference type="PRINTS" id="PR00868">
    <property type="entry name" value="DNAPOLI"/>
</dbReference>
<dbReference type="SMART" id="SM00474">
    <property type="entry name" value="35EXOc"/>
    <property type="match status" value="1"/>
</dbReference>
<dbReference type="SMART" id="SM00475">
    <property type="entry name" value="53EXOc"/>
    <property type="match status" value="1"/>
</dbReference>
<dbReference type="SMART" id="SM00279">
    <property type="entry name" value="HhH2"/>
    <property type="match status" value="1"/>
</dbReference>
<dbReference type="SMART" id="SM00482">
    <property type="entry name" value="POLAc"/>
    <property type="match status" value="1"/>
</dbReference>
<dbReference type="SUPFAM" id="SSF47807">
    <property type="entry name" value="5' to 3' exonuclease, C-terminal subdomain"/>
    <property type="match status" value="1"/>
</dbReference>
<dbReference type="SUPFAM" id="SSF56672">
    <property type="entry name" value="DNA/RNA polymerases"/>
    <property type="match status" value="1"/>
</dbReference>
<dbReference type="SUPFAM" id="SSF88723">
    <property type="entry name" value="PIN domain-like"/>
    <property type="match status" value="1"/>
</dbReference>
<dbReference type="SUPFAM" id="SSF53098">
    <property type="entry name" value="Ribonuclease H-like"/>
    <property type="match status" value="1"/>
</dbReference>
<dbReference type="PROSITE" id="PS00447">
    <property type="entry name" value="DNA_POLYMERASE_A"/>
    <property type="match status" value="1"/>
</dbReference>
<gene>
    <name type="primary">polA</name>
    <name type="ordered locus">ML1381</name>
</gene>
<reference key="1">
    <citation type="journal article" date="1995" name="Mol. Microbiol.">
        <title>The Mycobacterium leprae genome: systematic sequence analysis identifies key catabolic enzymes, ATP-dependent transport systems and a novel polA locus associated with genomic variability.</title>
        <authorList>
            <person name="Fsihi H."/>
            <person name="Cole S.T."/>
        </authorList>
    </citation>
    <scope>NUCLEOTIDE SEQUENCE [GENOMIC DNA]</scope>
</reference>
<reference key="2">
    <citation type="submission" date="1994-09" db="EMBL/GenBank/DDBJ databases">
        <authorList>
            <person name="Smith D.R."/>
            <person name="Robison K."/>
        </authorList>
    </citation>
    <scope>NUCLEOTIDE SEQUENCE [GENOMIC DNA]</scope>
</reference>
<reference key="3">
    <citation type="journal article" date="2001" name="Nature">
        <title>Massive gene decay in the leprosy bacillus.</title>
        <authorList>
            <person name="Cole S.T."/>
            <person name="Eiglmeier K."/>
            <person name="Parkhill J."/>
            <person name="James K.D."/>
            <person name="Thomson N.R."/>
            <person name="Wheeler P.R."/>
            <person name="Honore N."/>
            <person name="Garnier T."/>
            <person name="Churcher C.M."/>
            <person name="Harris D.E."/>
            <person name="Mungall K.L."/>
            <person name="Basham D."/>
            <person name="Brown D."/>
            <person name="Chillingworth T."/>
            <person name="Connor R."/>
            <person name="Davies R.M."/>
            <person name="Devlin K."/>
            <person name="Duthoy S."/>
            <person name="Feltwell T."/>
            <person name="Fraser A."/>
            <person name="Hamlin N."/>
            <person name="Holroyd S."/>
            <person name="Hornsby T."/>
            <person name="Jagels K."/>
            <person name="Lacroix C."/>
            <person name="Maclean J."/>
            <person name="Moule S."/>
            <person name="Murphy L.D."/>
            <person name="Oliver K."/>
            <person name="Quail M.A."/>
            <person name="Rajandream M.A."/>
            <person name="Rutherford K.M."/>
            <person name="Rutter S."/>
            <person name="Seeger K."/>
            <person name="Simon S."/>
            <person name="Simmonds M."/>
            <person name="Skelton J."/>
            <person name="Squares R."/>
            <person name="Squares S."/>
            <person name="Stevens K."/>
            <person name="Taylor K."/>
            <person name="Whitehead S."/>
            <person name="Woodward J.R."/>
            <person name="Barrell B.G."/>
        </authorList>
    </citation>
    <scope>NUCLEOTIDE SEQUENCE [LARGE SCALE GENOMIC DNA]</scope>
    <source>
        <strain>TN</strain>
    </source>
</reference>
<name>DPO1_MYCLE</name>
<proteinExistence type="inferred from homology"/>
<accession>P46835</accession>
<protein>
    <recommendedName>
        <fullName>DNA polymerase I</fullName>
        <shortName>POL I</shortName>
        <ecNumber>2.7.7.7</ecNumber>
    </recommendedName>
</protein>